<organism>
    <name type="scientific">Xenopus tropicalis</name>
    <name type="common">Western clawed frog</name>
    <name type="synonym">Silurana tropicalis</name>
    <dbReference type="NCBI Taxonomy" id="8364"/>
    <lineage>
        <taxon>Eukaryota</taxon>
        <taxon>Metazoa</taxon>
        <taxon>Chordata</taxon>
        <taxon>Craniata</taxon>
        <taxon>Vertebrata</taxon>
        <taxon>Euteleostomi</taxon>
        <taxon>Amphibia</taxon>
        <taxon>Batrachia</taxon>
        <taxon>Anura</taxon>
        <taxon>Pipoidea</taxon>
        <taxon>Pipidae</taxon>
        <taxon>Xenopodinae</taxon>
        <taxon>Xenopus</taxon>
        <taxon>Silurana</taxon>
    </lineage>
</organism>
<evidence type="ECO:0000250" key="1"/>
<evidence type="ECO:0000256" key="2">
    <source>
        <dbReference type="SAM" id="MobiDB-lite"/>
    </source>
</evidence>
<evidence type="ECO:0000305" key="3"/>
<feature type="chain" id="PRO_0000288063" description="Mediator of RNA polymerase II transcription subunit 29">
    <location>
        <begin position="1"/>
        <end position="188"/>
    </location>
</feature>
<feature type="region of interest" description="Disordered" evidence="2">
    <location>
        <begin position="1"/>
        <end position="27"/>
    </location>
</feature>
<feature type="compositionally biased region" description="Polar residues" evidence="2">
    <location>
        <begin position="1"/>
        <end position="11"/>
    </location>
</feature>
<gene>
    <name type="primary">med29</name>
    <name type="synonym">ixl</name>
</gene>
<sequence length="188" mass="20768">MAMLLNQSQPPQGREGGGTQVGSLGPGIPVGQQQQQLGLQQQQQDFDPVQRYRMLIPQLKESLQNLMKIAAQNLVQNTNIDNGQKNADGLVQRFDKSLEEFYAICDQLELCLRLAYECLSQSYDSAKHSPTLVPTATKPDAVQTESLPYTQYLSMIKSQISCAKDIHNALLECSKKIMGKTPNTQGGL</sequence>
<keyword id="KW-0010">Activator</keyword>
<keyword id="KW-0539">Nucleus</keyword>
<keyword id="KW-1185">Reference proteome</keyword>
<keyword id="KW-0804">Transcription</keyword>
<keyword id="KW-0805">Transcription regulation</keyword>
<proteinExistence type="evidence at transcript level"/>
<dbReference type="EMBL" id="BC124010">
    <property type="protein sequence ID" value="AAI24011.1"/>
    <property type="molecule type" value="mRNA"/>
</dbReference>
<dbReference type="RefSeq" id="NP_001072872.1">
    <property type="nucleotide sequence ID" value="NM_001079404.1"/>
</dbReference>
<dbReference type="SMR" id="Q08D01"/>
<dbReference type="FunCoup" id="Q08D01">
    <property type="interactions" value="2884"/>
</dbReference>
<dbReference type="STRING" id="8364.ENSXETP00000004009"/>
<dbReference type="PaxDb" id="8364-ENSXETP00000057016"/>
<dbReference type="DNASU" id="780334"/>
<dbReference type="GeneID" id="780334"/>
<dbReference type="KEGG" id="xtr:780334"/>
<dbReference type="AGR" id="Xenbase:XB-GENE-1006668"/>
<dbReference type="CTD" id="55588"/>
<dbReference type="Xenbase" id="XB-GENE-1006668">
    <property type="gene designation" value="med29"/>
</dbReference>
<dbReference type="eggNOG" id="ENOG502QRNJ">
    <property type="taxonomic scope" value="Eukaryota"/>
</dbReference>
<dbReference type="InParanoid" id="Q08D01"/>
<dbReference type="OMA" id="NHYLPGP"/>
<dbReference type="OrthoDB" id="6366949at2759"/>
<dbReference type="Proteomes" id="UP000008143">
    <property type="component" value="Chromosome 8"/>
</dbReference>
<dbReference type="GO" id="GO:0016592">
    <property type="term" value="C:mediator complex"/>
    <property type="evidence" value="ECO:0007669"/>
    <property type="project" value="InterPro"/>
</dbReference>
<dbReference type="InterPro" id="IPR021018">
    <property type="entry name" value="Mediator_Med29_met"/>
</dbReference>
<dbReference type="PANTHER" id="PTHR28314">
    <property type="entry name" value="MEDIATOR OF RNA POLYMERASE II TRANSCRIPTION SUBUNIT 29"/>
    <property type="match status" value="1"/>
</dbReference>
<dbReference type="PANTHER" id="PTHR28314:SF1">
    <property type="entry name" value="MEDIATOR OF RNA POLYMERASE II TRANSCRIPTION SUBUNIT 29"/>
    <property type="match status" value="1"/>
</dbReference>
<dbReference type="Pfam" id="PF11568">
    <property type="entry name" value="Med29"/>
    <property type="match status" value="1"/>
</dbReference>
<name>MED29_XENTR</name>
<protein>
    <recommendedName>
        <fullName>Mediator of RNA polymerase II transcription subunit 29</fullName>
    </recommendedName>
    <alternativeName>
        <fullName>Intersex-like protein</fullName>
    </alternativeName>
    <alternativeName>
        <fullName>Mediator complex subunit 29</fullName>
    </alternativeName>
</protein>
<accession>Q08D01</accession>
<comment type="function">
    <text evidence="1">Component of the Mediator complex, a coactivator involved in the regulated transcription of nearly all RNA polymerase II-dependent genes. Mediator functions as a bridge to convey information from gene-specific regulatory proteins to the basal RNA polymerase II transcription machinery. Mediator is recruited to promoters by direct interactions with regulatory proteins and serves as a scaffold for the assembly of a functional preinitiation complex with RNA polymerase II and the general transcription factors (By similarity).</text>
</comment>
<comment type="subunit">
    <text evidence="1">Component of the Mediator complex.</text>
</comment>
<comment type="subcellular location">
    <subcellularLocation>
        <location evidence="1">Nucleus</location>
    </subcellularLocation>
</comment>
<comment type="similarity">
    <text evidence="3">Belongs to the Mediator complex subunit 29 family.</text>
</comment>
<reference key="1">
    <citation type="submission" date="2006-09" db="EMBL/GenBank/DDBJ databases">
        <authorList>
            <consortium name="NIH - Xenopus Gene Collection (XGC) project"/>
        </authorList>
    </citation>
    <scope>NUCLEOTIDE SEQUENCE [LARGE SCALE MRNA]</scope>
    <source>
        <strain>N6</strain>
        <tissue>Ovary</tissue>
    </source>
</reference>